<sequence>MNLIEQLEREEIERLGKTIPDFSPGDTLVVNVNVVEGDRKRVQAFEGVVIAKRNRGLNSSFIVRKISSGEAVERTFQTYSPLIASMEVKRRGAVRRAKLYYLRDRSGKAARIREKLPARSVQQENVAEALQP</sequence>
<proteinExistence type="inferred from homology"/>
<accession>Q82U36</accession>
<gene>
    <name evidence="1" type="primary">rplS</name>
    <name type="ordered locus">NE1674</name>
</gene>
<dbReference type="EMBL" id="AL954747">
    <property type="protein sequence ID" value="CAD85585.1"/>
    <property type="molecule type" value="Genomic_DNA"/>
</dbReference>
<dbReference type="RefSeq" id="WP_011112231.1">
    <property type="nucleotide sequence ID" value="NC_004757.1"/>
</dbReference>
<dbReference type="SMR" id="Q82U36"/>
<dbReference type="STRING" id="228410.NE1674"/>
<dbReference type="GeneID" id="87104838"/>
<dbReference type="KEGG" id="neu:NE1674"/>
<dbReference type="eggNOG" id="COG0335">
    <property type="taxonomic scope" value="Bacteria"/>
</dbReference>
<dbReference type="HOGENOM" id="CLU_103507_1_0_4"/>
<dbReference type="OrthoDB" id="9803541at2"/>
<dbReference type="PhylomeDB" id="Q82U36"/>
<dbReference type="Proteomes" id="UP000001416">
    <property type="component" value="Chromosome"/>
</dbReference>
<dbReference type="GO" id="GO:0022625">
    <property type="term" value="C:cytosolic large ribosomal subunit"/>
    <property type="evidence" value="ECO:0007669"/>
    <property type="project" value="TreeGrafter"/>
</dbReference>
<dbReference type="GO" id="GO:0003735">
    <property type="term" value="F:structural constituent of ribosome"/>
    <property type="evidence" value="ECO:0007669"/>
    <property type="project" value="InterPro"/>
</dbReference>
<dbReference type="GO" id="GO:0006412">
    <property type="term" value="P:translation"/>
    <property type="evidence" value="ECO:0007669"/>
    <property type="project" value="UniProtKB-UniRule"/>
</dbReference>
<dbReference type="FunFam" id="2.30.30.790:FF:000001">
    <property type="entry name" value="50S ribosomal protein L19"/>
    <property type="match status" value="1"/>
</dbReference>
<dbReference type="Gene3D" id="2.30.30.790">
    <property type="match status" value="1"/>
</dbReference>
<dbReference type="HAMAP" id="MF_00402">
    <property type="entry name" value="Ribosomal_bL19"/>
    <property type="match status" value="1"/>
</dbReference>
<dbReference type="InterPro" id="IPR001857">
    <property type="entry name" value="Ribosomal_bL19"/>
</dbReference>
<dbReference type="InterPro" id="IPR018257">
    <property type="entry name" value="Ribosomal_bL19_CS"/>
</dbReference>
<dbReference type="InterPro" id="IPR038657">
    <property type="entry name" value="Ribosomal_bL19_sf"/>
</dbReference>
<dbReference type="InterPro" id="IPR008991">
    <property type="entry name" value="Translation_prot_SH3-like_sf"/>
</dbReference>
<dbReference type="NCBIfam" id="TIGR01024">
    <property type="entry name" value="rplS_bact"/>
    <property type="match status" value="1"/>
</dbReference>
<dbReference type="PANTHER" id="PTHR15680:SF9">
    <property type="entry name" value="LARGE RIBOSOMAL SUBUNIT PROTEIN BL19M"/>
    <property type="match status" value="1"/>
</dbReference>
<dbReference type="PANTHER" id="PTHR15680">
    <property type="entry name" value="RIBOSOMAL PROTEIN L19"/>
    <property type="match status" value="1"/>
</dbReference>
<dbReference type="Pfam" id="PF01245">
    <property type="entry name" value="Ribosomal_L19"/>
    <property type="match status" value="1"/>
</dbReference>
<dbReference type="PIRSF" id="PIRSF002191">
    <property type="entry name" value="Ribosomal_L19"/>
    <property type="match status" value="1"/>
</dbReference>
<dbReference type="PRINTS" id="PR00061">
    <property type="entry name" value="RIBOSOMALL19"/>
</dbReference>
<dbReference type="SUPFAM" id="SSF50104">
    <property type="entry name" value="Translation proteins SH3-like domain"/>
    <property type="match status" value="1"/>
</dbReference>
<dbReference type="PROSITE" id="PS01015">
    <property type="entry name" value="RIBOSOMAL_L19"/>
    <property type="match status" value="1"/>
</dbReference>
<name>RL19_NITEU</name>
<feature type="chain" id="PRO_0000163497" description="Large ribosomal subunit protein bL19">
    <location>
        <begin position="1"/>
        <end position="132"/>
    </location>
</feature>
<evidence type="ECO:0000255" key="1">
    <source>
        <dbReference type="HAMAP-Rule" id="MF_00402"/>
    </source>
</evidence>
<evidence type="ECO:0000305" key="2"/>
<reference key="1">
    <citation type="journal article" date="2003" name="J. Bacteriol.">
        <title>Complete genome sequence of the ammonia-oxidizing bacterium and obligate chemolithoautotroph Nitrosomonas europaea.</title>
        <authorList>
            <person name="Chain P."/>
            <person name="Lamerdin J.E."/>
            <person name="Larimer F.W."/>
            <person name="Regala W."/>
            <person name="Lao V."/>
            <person name="Land M.L."/>
            <person name="Hauser L."/>
            <person name="Hooper A.B."/>
            <person name="Klotz M.G."/>
            <person name="Norton J."/>
            <person name="Sayavedra-Soto L.A."/>
            <person name="Arciero D.M."/>
            <person name="Hommes N.G."/>
            <person name="Whittaker M.M."/>
            <person name="Arp D.J."/>
        </authorList>
    </citation>
    <scope>NUCLEOTIDE SEQUENCE [LARGE SCALE GENOMIC DNA]</scope>
    <source>
        <strain>ATCC 19718 / CIP 103999 / KCTC 2705 / NBRC 14298</strain>
    </source>
</reference>
<comment type="function">
    <text evidence="1">This protein is located at the 30S-50S ribosomal subunit interface and may play a role in the structure and function of the aminoacyl-tRNA binding site.</text>
</comment>
<comment type="similarity">
    <text evidence="1">Belongs to the bacterial ribosomal protein bL19 family.</text>
</comment>
<keyword id="KW-1185">Reference proteome</keyword>
<keyword id="KW-0687">Ribonucleoprotein</keyword>
<keyword id="KW-0689">Ribosomal protein</keyword>
<organism>
    <name type="scientific">Nitrosomonas europaea (strain ATCC 19718 / CIP 103999 / KCTC 2705 / NBRC 14298)</name>
    <dbReference type="NCBI Taxonomy" id="228410"/>
    <lineage>
        <taxon>Bacteria</taxon>
        <taxon>Pseudomonadati</taxon>
        <taxon>Pseudomonadota</taxon>
        <taxon>Betaproteobacteria</taxon>
        <taxon>Nitrosomonadales</taxon>
        <taxon>Nitrosomonadaceae</taxon>
        <taxon>Nitrosomonas</taxon>
    </lineage>
</organism>
<protein>
    <recommendedName>
        <fullName evidence="1">Large ribosomal subunit protein bL19</fullName>
    </recommendedName>
    <alternativeName>
        <fullName evidence="2">50S ribosomal protein L19</fullName>
    </alternativeName>
</protein>